<proteinExistence type="inferred from homology"/>
<keyword id="KW-0067">ATP-binding</keyword>
<keyword id="KW-0997">Cell inner membrane</keyword>
<keyword id="KW-1003">Cell membrane</keyword>
<keyword id="KW-0472">Membrane</keyword>
<keyword id="KW-0547">Nucleotide-binding</keyword>
<keyword id="KW-1185">Reference proteome</keyword>
<keyword id="KW-0677">Repeat</keyword>
<keyword id="KW-0762">Sugar transport</keyword>
<keyword id="KW-1278">Translocase</keyword>
<keyword id="KW-0813">Transport</keyword>
<organism>
    <name type="scientific">Escherichia coli O157:H7</name>
    <dbReference type="NCBI Taxonomy" id="83334"/>
    <lineage>
        <taxon>Bacteria</taxon>
        <taxon>Pseudomonadati</taxon>
        <taxon>Pseudomonadota</taxon>
        <taxon>Gammaproteobacteria</taxon>
        <taxon>Enterobacterales</taxon>
        <taxon>Enterobacteriaceae</taxon>
        <taxon>Escherichia</taxon>
    </lineage>
</organism>
<accession>Q8XAW7</accession>
<accession>Q7A9G8</accession>
<reference key="1">
    <citation type="journal article" date="2001" name="Nature">
        <title>Genome sequence of enterohaemorrhagic Escherichia coli O157:H7.</title>
        <authorList>
            <person name="Perna N.T."/>
            <person name="Plunkett G. III"/>
            <person name="Burland V."/>
            <person name="Mau B."/>
            <person name="Glasner J.D."/>
            <person name="Rose D.J."/>
            <person name="Mayhew G.F."/>
            <person name="Evans P.S."/>
            <person name="Gregor J."/>
            <person name="Kirkpatrick H.A."/>
            <person name="Posfai G."/>
            <person name="Hackett J."/>
            <person name="Klink S."/>
            <person name="Boutin A."/>
            <person name="Shao Y."/>
            <person name="Miller L."/>
            <person name="Grotbeck E.J."/>
            <person name="Davis N.W."/>
            <person name="Lim A."/>
            <person name="Dimalanta E.T."/>
            <person name="Potamousis K."/>
            <person name="Apodaca J."/>
            <person name="Anantharaman T.S."/>
            <person name="Lin J."/>
            <person name="Yen G."/>
            <person name="Schwartz D.C."/>
            <person name="Welch R.A."/>
            <person name="Blattner F.R."/>
        </authorList>
    </citation>
    <scope>NUCLEOTIDE SEQUENCE [LARGE SCALE GENOMIC DNA]</scope>
    <source>
        <strain>O157:H7 / EDL933 / ATCC 700927 / EHEC</strain>
    </source>
</reference>
<reference key="2">
    <citation type="journal article" date="2001" name="DNA Res.">
        <title>Complete genome sequence of enterohemorrhagic Escherichia coli O157:H7 and genomic comparison with a laboratory strain K-12.</title>
        <authorList>
            <person name="Hayashi T."/>
            <person name="Makino K."/>
            <person name="Ohnishi M."/>
            <person name="Kurokawa K."/>
            <person name="Ishii K."/>
            <person name="Yokoyama K."/>
            <person name="Han C.-G."/>
            <person name="Ohtsubo E."/>
            <person name="Nakayama K."/>
            <person name="Murata T."/>
            <person name="Tanaka M."/>
            <person name="Tobe T."/>
            <person name="Iida T."/>
            <person name="Takami H."/>
            <person name="Honda T."/>
            <person name="Sasakawa C."/>
            <person name="Ogasawara N."/>
            <person name="Yasunaga T."/>
            <person name="Kuhara S."/>
            <person name="Shiba T."/>
            <person name="Hattori M."/>
            <person name="Shinagawa H."/>
        </authorList>
    </citation>
    <scope>NUCLEOTIDE SEQUENCE [LARGE SCALE GENOMIC DNA]</scope>
    <source>
        <strain>O157:H7 / Sakai / RIMD 0509952 / EHEC</strain>
    </source>
</reference>
<comment type="function">
    <text evidence="1">Part of the ABC transporter complex RbsABC involved in ribose import. Responsible for energy coupling to the transport system.</text>
</comment>
<comment type="catalytic activity">
    <reaction evidence="1">
        <text>D-ribose(out) + ATP + H2O = D-ribose(in) + ADP + phosphate + H(+)</text>
        <dbReference type="Rhea" id="RHEA:29903"/>
        <dbReference type="ChEBI" id="CHEBI:15377"/>
        <dbReference type="ChEBI" id="CHEBI:15378"/>
        <dbReference type="ChEBI" id="CHEBI:30616"/>
        <dbReference type="ChEBI" id="CHEBI:43474"/>
        <dbReference type="ChEBI" id="CHEBI:47013"/>
        <dbReference type="ChEBI" id="CHEBI:456216"/>
        <dbReference type="EC" id="7.5.2.7"/>
    </reaction>
</comment>
<comment type="subunit">
    <text evidence="1">The complex is composed of an ATP-binding protein (RbsA), two transmembrane proteins (RbsC) and a solute-binding protein (RbsB).</text>
</comment>
<comment type="subcellular location">
    <subcellularLocation>
        <location evidence="1">Cell inner membrane</location>
        <topology evidence="1">Peripheral membrane protein</topology>
    </subcellularLocation>
</comment>
<comment type="similarity">
    <text evidence="1">Belongs to the ABC transporter superfamily. Ribose importer (TC 3.A.1.2.1) family.</text>
</comment>
<feature type="chain" id="PRO_0000261064" description="Ribose import ATP-binding protein RbsA 1">
    <location>
        <begin position="1"/>
        <end position="501"/>
    </location>
</feature>
<feature type="domain" description="ABC transporter 1" evidence="1">
    <location>
        <begin position="5"/>
        <end position="241"/>
    </location>
</feature>
<feature type="domain" description="ABC transporter 2" evidence="1">
    <location>
        <begin position="252"/>
        <end position="495"/>
    </location>
</feature>
<feature type="binding site" evidence="1">
    <location>
        <begin position="37"/>
        <end position="44"/>
    </location>
    <ligand>
        <name>ATP</name>
        <dbReference type="ChEBI" id="CHEBI:30616"/>
    </ligand>
</feature>
<name>RBSA1_ECO57</name>
<gene>
    <name evidence="1" type="primary">rbsA1</name>
    <name type="ordered locus">Z5250</name>
    <name type="ordered locus">ECs4691</name>
</gene>
<sequence length="501" mass="55016">MEALLQLKGIDKAFPGVKALSGAALNVYPGRVMALVGENGAGKSTMMKVLTGIYTRDAGTLLWLGKETTFTGPKSSQEAGIGIIHQELNLIPQLTIAENIFLGREFVNRFGKIDWKTMYAEADKLLAKLNLRFKSDKLVGDLSIGDQQMVEIAKVLSFESKVIIMDEPTDALTDTETESLFRVIRELKSQGRGIVYISHRMKEIFESCDDVTVFRDGQFIAEREVASLTEDSLIEMMVGRKLEDQYPHLDKAPGDIRLKVDNLCGPGVNDVSFTLRKGEILGVSGLMGAGRTELMKVLYGALPRTSGYVTLDGHEVVTRSPQDGLANGIVYISEDRKRDGLVLGMSVKENMSLTALRYFSRAGGSLKHADEQQAVSDFIRLFNVKTPSMEQAIGLLSGGNQQKVAIARGLMTRPKVLILDEPTRGVDVGAKKEIYQLINQFKADGLSIILVSSEMPEVLGMSDRIIVMHEGHLSGEFTREQATQEVLMAAAVGKLNRVNQE</sequence>
<dbReference type="EC" id="7.5.2.7" evidence="1"/>
<dbReference type="EMBL" id="AE005174">
    <property type="protein sequence ID" value="AAG58952.1"/>
    <property type="molecule type" value="Genomic_DNA"/>
</dbReference>
<dbReference type="EMBL" id="BA000007">
    <property type="protein sequence ID" value="BAB38114.1"/>
    <property type="molecule type" value="Genomic_DNA"/>
</dbReference>
<dbReference type="PIR" id="C91215">
    <property type="entry name" value="C91215"/>
</dbReference>
<dbReference type="PIR" id="D86061">
    <property type="entry name" value="D86061"/>
</dbReference>
<dbReference type="SMR" id="Q8XAW7"/>
<dbReference type="STRING" id="155864.Z5250"/>
<dbReference type="KEGG" id="ece:Z5250"/>
<dbReference type="KEGG" id="ecs:ECs_4691"/>
<dbReference type="PATRIC" id="fig|386585.9.peg.4897"/>
<dbReference type="eggNOG" id="COG1129">
    <property type="taxonomic scope" value="Bacteria"/>
</dbReference>
<dbReference type="HOGENOM" id="CLU_000604_92_3_6"/>
<dbReference type="OMA" id="KWIGIGP"/>
<dbReference type="Proteomes" id="UP000000558">
    <property type="component" value="Chromosome"/>
</dbReference>
<dbReference type="Proteomes" id="UP000002519">
    <property type="component" value="Chromosome"/>
</dbReference>
<dbReference type="GO" id="GO:0005886">
    <property type="term" value="C:plasma membrane"/>
    <property type="evidence" value="ECO:0007669"/>
    <property type="project" value="UniProtKB-SubCell"/>
</dbReference>
<dbReference type="GO" id="GO:0015611">
    <property type="term" value="F:ABC-type D-ribose transporter activity"/>
    <property type="evidence" value="ECO:0007669"/>
    <property type="project" value="UniProtKB-EC"/>
</dbReference>
<dbReference type="GO" id="GO:0005524">
    <property type="term" value="F:ATP binding"/>
    <property type="evidence" value="ECO:0007669"/>
    <property type="project" value="UniProtKB-KW"/>
</dbReference>
<dbReference type="GO" id="GO:0016887">
    <property type="term" value="F:ATP hydrolysis activity"/>
    <property type="evidence" value="ECO:0007669"/>
    <property type="project" value="InterPro"/>
</dbReference>
<dbReference type="CDD" id="cd03216">
    <property type="entry name" value="ABC_Carb_Monos_I"/>
    <property type="match status" value="1"/>
</dbReference>
<dbReference type="CDD" id="cd03215">
    <property type="entry name" value="ABC_Carb_Monos_II"/>
    <property type="match status" value="1"/>
</dbReference>
<dbReference type="FunFam" id="3.40.50.300:FF:000126">
    <property type="entry name" value="Galactose/methyl galactoside import ATP-binding protein MglA"/>
    <property type="match status" value="1"/>
</dbReference>
<dbReference type="FunFam" id="3.40.50.300:FF:000127">
    <property type="entry name" value="Ribose import ATP-binding protein RbsA"/>
    <property type="match status" value="1"/>
</dbReference>
<dbReference type="Gene3D" id="3.40.50.300">
    <property type="entry name" value="P-loop containing nucleotide triphosphate hydrolases"/>
    <property type="match status" value="2"/>
</dbReference>
<dbReference type="InterPro" id="IPR003593">
    <property type="entry name" value="AAA+_ATPase"/>
</dbReference>
<dbReference type="InterPro" id="IPR050107">
    <property type="entry name" value="ABC_carbohydrate_import_ATPase"/>
</dbReference>
<dbReference type="InterPro" id="IPR003439">
    <property type="entry name" value="ABC_transporter-like_ATP-bd"/>
</dbReference>
<dbReference type="InterPro" id="IPR017871">
    <property type="entry name" value="ABC_transporter-like_CS"/>
</dbReference>
<dbReference type="InterPro" id="IPR027417">
    <property type="entry name" value="P-loop_NTPase"/>
</dbReference>
<dbReference type="NCBIfam" id="NF008030">
    <property type="entry name" value="PRK10762.1"/>
    <property type="match status" value="1"/>
</dbReference>
<dbReference type="PANTHER" id="PTHR43790">
    <property type="entry name" value="CARBOHYDRATE TRANSPORT ATP-BINDING PROTEIN MG119-RELATED"/>
    <property type="match status" value="1"/>
</dbReference>
<dbReference type="PANTHER" id="PTHR43790:SF3">
    <property type="entry name" value="D-ALLOSE IMPORT ATP-BINDING PROTEIN ALSA-RELATED"/>
    <property type="match status" value="1"/>
</dbReference>
<dbReference type="Pfam" id="PF00005">
    <property type="entry name" value="ABC_tran"/>
    <property type="match status" value="2"/>
</dbReference>
<dbReference type="SMART" id="SM00382">
    <property type="entry name" value="AAA"/>
    <property type="match status" value="2"/>
</dbReference>
<dbReference type="SUPFAM" id="SSF52540">
    <property type="entry name" value="P-loop containing nucleoside triphosphate hydrolases"/>
    <property type="match status" value="2"/>
</dbReference>
<dbReference type="PROSITE" id="PS00211">
    <property type="entry name" value="ABC_TRANSPORTER_1"/>
    <property type="match status" value="1"/>
</dbReference>
<dbReference type="PROSITE" id="PS50893">
    <property type="entry name" value="ABC_TRANSPORTER_2"/>
    <property type="match status" value="1"/>
</dbReference>
<dbReference type="PROSITE" id="PS51254">
    <property type="entry name" value="RBSA"/>
    <property type="match status" value="1"/>
</dbReference>
<protein>
    <recommendedName>
        <fullName evidence="1">Ribose import ATP-binding protein RbsA 1</fullName>
        <ecNumber evidence="1">7.5.2.7</ecNumber>
    </recommendedName>
</protein>
<evidence type="ECO:0000255" key="1">
    <source>
        <dbReference type="HAMAP-Rule" id="MF_01716"/>
    </source>
</evidence>